<accession>Q3KMZ6</accession>
<gene>
    <name evidence="1" type="primary">rpsP</name>
    <name type="ordered locus">CTA_0028</name>
</gene>
<sequence length="116" mass="13357">MALKIRLRQQGCKNHVVYRLVLADVESPRDGKYIELLGWYDPHSEQNYQLKSERIFYWLNQGAELTEKAGALVKQGAPGVYAELMAKKVARRAVVRQKRRAYRQRLAARKAEAAAK</sequence>
<feature type="chain" id="PRO_0000243792" description="Small ribosomal subunit protein bS16">
    <location>
        <begin position="1"/>
        <end position="116"/>
    </location>
</feature>
<dbReference type="EMBL" id="CP000051">
    <property type="protein sequence ID" value="AAX50276.1"/>
    <property type="molecule type" value="Genomic_DNA"/>
</dbReference>
<dbReference type="RefSeq" id="WP_011324527.1">
    <property type="nucleotide sequence ID" value="NC_007429.1"/>
</dbReference>
<dbReference type="SMR" id="Q3KMZ6"/>
<dbReference type="KEGG" id="cta:CTA_0028"/>
<dbReference type="HOGENOM" id="CLU_100590_3_1_0"/>
<dbReference type="Proteomes" id="UP000002532">
    <property type="component" value="Chromosome"/>
</dbReference>
<dbReference type="GO" id="GO:0005737">
    <property type="term" value="C:cytoplasm"/>
    <property type="evidence" value="ECO:0007669"/>
    <property type="project" value="UniProtKB-ARBA"/>
</dbReference>
<dbReference type="GO" id="GO:0015935">
    <property type="term" value="C:small ribosomal subunit"/>
    <property type="evidence" value="ECO:0007669"/>
    <property type="project" value="TreeGrafter"/>
</dbReference>
<dbReference type="GO" id="GO:0003735">
    <property type="term" value="F:structural constituent of ribosome"/>
    <property type="evidence" value="ECO:0007669"/>
    <property type="project" value="InterPro"/>
</dbReference>
<dbReference type="GO" id="GO:0006412">
    <property type="term" value="P:translation"/>
    <property type="evidence" value="ECO:0007669"/>
    <property type="project" value="UniProtKB-UniRule"/>
</dbReference>
<dbReference type="FunFam" id="3.30.1320.10:FF:000015">
    <property type="entry name" value="30S ribosomal protein S16"/>
    <property type="match status" value="1"/>
</dbReference>
<dbReference type="Gene3D" id="3.30.1320.10">
    <property type="match status" value="1"/>
</dbReference>
<dbReference type="HAMAP" id="MF_00385">
    <property type="entry name" value="Ribosomal_bS16"/>
    <property type="match status" value="1"/>
</dbReference>
<dbReference type="InterPro" id="IPR000307">
    <property type="entry name" value="Ribosomal_bS16"/>
</dbReference>
<dbReference type="InterPro" id="IPR023803">
    <property type="entry name" value="Ribosomal_bS16_dom_sf"/>
</dbReference>
<dbReference type="NCBIfam" id="NF011095">
    <property type="entry name" value="PRK14522.1"/>
    <property type="match status" value="1"/>
</dbReference>
<dbReference type="NCBIfam" id="TIGR00002">
    <property type="entry name" value="S16"/>
    <property type="match status" value="1"/>
</dbReference>
<dbReference type="PANTHER" id="PTHR12919">
    <property type="entry name" value="30S RIBOSOMAL PROTEIN S16"/>
    <property type="match status" value="1"/>
</dbReference>
<dbReference type="PANTHER" id="PTHR12919:SF20">
    <property type="entry name" value="SMALL RIBOSOMAL SUBUNIT PROTEIN BS16M"/>
    <property type="match status" value="1"/>
</dbReference>
<dbReference type="Pfam" id="PF00886">
    <property type="entry name" value="Ribosomal_S16"/>
    <property type="match status" value="1"/>
</dbReference>
<dbReference type="SUPFAM" id="SSF54565">
    <property type="entry name" value="Ribosomal protein S16"/>
    <property type="match status" value="1"/>
</dbReference>
<organism>
    <name type="scientific">Chlamydia trachomatis serovar A (strain ATCC VR-571B / DSM 19440 / HAR-13)</name>
    <dbReference type="NCBI Taxonomy" id="315277"/>
    <lineage>
        <taxon>Bacteria</taxon>
        <taxon>Pseudomonadati</taxon>
        <taxon>Chlamydiota</taxon>
        <taxon>Chlamydiia</taxon>
        <taxon>Chlamydiales</taxon>
        <taxon>Chlamydiaceae</taxon>
        <taxon>Chlamydia/Chlamydophila group</taxon>
        <taxon>Chlamydia</taxon>
    </lineage>
</organism>
<keyword id="KW-0687">Ribonucleoprotein</keyword>
<keyword id="KW-0689">Ribosomal protein</keyword>
<evidence type="ECO:0000255" key="1">
    <source>
        <dbReference type="HAMAP-Rule" id="MF_00385"/>
    </source>
</evidence>
<evidence type="ECO:0000305" key="2"/>
<proteinExistence type="inferred from homology"/>
<reference key="1">
    <citation type="journal article" date="2005" name="Infect. Immun.">
        <title>Comparative genomic analysis of Chlamydia trachomatis oculotropic and genitotropic strains.</title>
        <authorList>
            <person name="Carlson J.H."/>
            <person name="Porcella S.F."/>
            <person name="McClarty G."/>
            <person name="Caldwell H.D."/>
        </authorList>
    </citation>
    <scope>NUCLEOTIDE SEQUENCE [LARGE SCALE GENOMIC DNA]</scope>
    <source>
        <strain>ATCC VR-571B / DSM 19440 / HAR-13</strain>
    </source>
</reference>
<comment type="similarity">
    <text evidence="1">Belongs to the bacterial ribosomal protein bS16 family.</text>
</comment>
<name>RS16_CHLTA</name>
<protein>
    <recommendedName>
        <fullName evidence="1">Small ribosomal subunit protein bS16</fullName>
    </recommendedName>
    <alternativeName>
        <fullName evidence="2">30S ribosomal protein S16</fullName>
    </alternativeName>
</protein>